<proteinExistence type="inferred from homology"/>
<evidence type="ECO:0000255" key="1">
    <source>
        <dbReference type="HAMAP-Rule" id="MF_01507"/>
    </source>
</evidence>
<protein>
    <recommendedName>
        <fullName evidence="1">UPF0297 protein spr0175</fullName>
    </recommendedName>
</protein>
<organism>
    <name type="scientific">Streptococcus pneumoniae (strain ATCC BAA-255 / R6)</name>
    <dbReference type="NCBI Taxonomy" id="171101"/>
    <lineage>
        <taxon>Bacteria</taxon>
        <taxon>Bacillati</taxon>
        <taxon>Bacillota</taxon>
        <taxon>Bacilli</taxon>
        <taxon>Lactobacillales</taxon>
        <taxon>Streptococcaceae</taxon>
        <taxon>Streptococcus</taxon>
    </lineage>
</organism>
<comment type="similarity">
    <text evidence="1">Belongs to the UPF0297 family.</text>
</comment>
<feature type="chain" id="PRO_0000216991" description="UPF0297 protein spr0175">
    <location>
        <begin position="1"/>
        <end position="88"/>
    </location>
</feature>
<reference key="1">
    <citation type="journal article" date="2001" name="J. Bacteriol.">
        <title>Genome of the bacterium Streptococcus pneumoniae strain R6.</title>
        <authorList>
            <person name="Hoskins J."/>
            <person name="Alborn W.E. Jr."/>
            <person name="Arnold J."/>
            <person name="Blaszczak L.C."/>
            <person name="Burgett S."/>
            <person name="DeHoff B.S."/>
            <person name="Estrem S.T."/>
            <person name="Fritz L."/>
            <person name="Fu D.-J."/>
            <person name="Fuller W."/>
            <person name="Geringer C."/>
            <person name="Gilmour R."/>
            <person name="Glass J.S."/>
            <person name="Khoja H."/>
            <person name="Kraft A.R."/>
            <person name="Lagace R.E."/>
            <person name="LeBlanc D.J."/>
            <person name="Lee L.N."/>
            <person name="Lefkowitz E.J."/>
            <person name="Lu J."/>
            <person name="Matsushima P."/>
            <person name="McAhren S.M."/>
            <person name="McHenney M."/>
            <person name="McLeaster K."/>
            <person name="Mundy C.W."/>
            <person name="Nicas T.I."/>
            <person name="Norris F.H."/>
            <person name="O'Gara M."/>
            <person name="Peery R.B."/>
            <person name="Robertson G.T."/>
            <person name="Rockey P."/>
            <person name="Sun P.-M."/>
            <person name="Winkler M.E."/>
            <person name="Yang Y."/>
            <person name="Young-Bellido M."/>
            <person name="Zhao G."/>
            <person name="Zook C.A."/>
            <person name="Baltz R.H."/>
            <person name="Jaskunas S.R."/>
            <person name="Rosteck P.R. Jr."/>
            <person name="Skatrud P.L."/>
            <person name="Glass J.I."/>
        </authorList>
    </citation>
    <scope>NUCLEOTIDE SEQUENCE [LARGE SCALE GENOMIC DNA]</scope>
    <source>
        <strain>ATCC BAA-255 / R6</strain>
    </source>
</reference>
<name>Y175_STRR6</name>
<dbReference type="EMBL" id="AE007317">
    <property type="protein sequence ID" value="AAK98979.1"/>
    <property type="molecule type" value="Genomic_DNA"/>
</dbReference>
<dbReference type="PIR" id="G97893">
    <property type="entry name" value="G97893"/>
</dbReference>
<dbReference type="RefSeq" id="NP_357769.1">
    <property type="nucleotide sequence ID" value="NC_003098.1"/>
</dbReference>
<dbReference type="RefSeq" id="WP_000507059.1">
    <property type="nucleotide sequence ID" value="NC_003098.1"/>
</dbReference>
<dbReference type="SMR" id="Q8CZ89"/>
<dbReference type="STRING" id="171101.spr0175"/>
<dbReference type="KEGG" id="spr:spr0175"/>
<dbReference type="PATRIC" id="fig|171101.6.peg.207"/>
<dbReference type="eggNOG" id="COG4472">
    <property type="taxonomic scope" value="Bacteria"/>
</dbReference>
<dbReference type="HOGENOM" id="CLU_162466_0_0_9"/>
<dbReference type="PHI-base" id="PHI:3155"/>
<dbReference type="Proteomes" id="UP000000586">
    <property type="component" value="Chromosome"/>
</dbReference>
<dbReference type="HAMAP" id="MF_01507">
    <property type="entry name" value="UPF0297"/>
    <property type="match status" value="1"/>
</dbReference>
<dbReference type="InterPro" id="IPR009309">
    <property type="entry name" value="IreB"/>
</dbReference>
<dbReference type="NCBIfam" id="NF003997">
    <property type="entry name" value="PRK05473.1"/>
    <property type="match status" value="1"/>
</dbReference>
<dbReference type="PANTHER" id="PTHR40067">
    <property type="entry name" value="UPF0297 PROTEIN YRZL"/>
    <property type="match status" value="1"/>
</dbReference>
<dbReference type="PANTHER" id="PTHR40067:SF1">
    <property type="entry name" value="UPF0297 PROTEIN YRZL"/>
    <property type="match status" value="1"/>
</dbReference>
<dbReference type="Pfam" id="PF06135">
    <property type="entry name" value="IreB"/>
    <property type="match status" value="1"/>
</dbReference>
<dbReference type="PIRSF" id="PIRSF037258">
    <property type="entry name" value="DUF965_bac"/>
    <property type="match status" value="1"/>
</dbReference>
<accession>Q8CZ89</accession>
<sequence>MGFTEETVRFKLDDSNKKEISETLTDVYASLNDKGYNPINQIVGYVLSGDPAYVPRYNNARNQIRKYERDEIVEELVRYYLKGQGVDL</sequence>
<keyword id="KW-1185">Reference proteome</keyword>
<gene>
    <name type="ordered locus">spr0175</name>
</gene>